<organism>
    <name type="scientific">Homo sapiens</name>
    <name type="common">Human</name>
    <dbReference type="NCBI Taxonomy" id="9606"/>
    <lineage>
        <taxon>Eukaryota</taxon>
        <taxon>Metazoa</taxon>
        <taxon>Chordata</taxon>
        <taxon>Craniata</taxon>
        <taxon>Vertebrata</taxon>
        <taxon>Euteleostomi</taxon>
        <taxon>Mammalia</taxon>
        <taxon>Eutheria</taxon>
        <taxon>Euarchontoglires</taxon>
        <taxon>Primates</taxon>
        <taxon>Haplorrhini</taxon>
        <taxon>Catarrhini</taxon>
        <taxon>Hominidae</taxon>
        <taxon>Homo</taxon>
    </lineage>
</organism>
<evidence type="ECO:0000250" key="1">
    <source>
        <dbReference type="UniProtKB" id="P78348"/>
    </source>
</evidence>
<evidence type="ECO:0000250" key="2">
    <source>
        <dbReference type="UniProtKB" id="Q708S4"/>
    </source>
</evidence>
<evidence type="ECO:0000250" key="3">
    <source>
        <dbReference type="UniProtKB" id="Q9JHS6"/>
    </source>
</evidence>
<evidence type="ECO:0000255" key="4"/>
<evidence type="ECO:0000256" key="5">
    <source>
        <dbReference type="SAM" id="MobiDB-lite"/>
    </source>
</evidence>
<evidence type="ECO:0000269" key="6">
    <source>
    </source>
</evidence>
<evidence type="ECO:0000269" key="7">
    <source>
    </source>
</evidence>
<evidence type="ECO:0000269" key="8">
    <source>
    </source>
</evidence>
<evidence type="ECO:0000305" key="9"/>
<evidence type="ECO:0000312" key="10">
    <source>
        <dbReference type="HGNC" id="HGNC:21263"/>
    </source>
</evidence>
<accession>Q96FT7</accession>
<accession>Q53SB7</accession>
<accession>Q6GMS1</accession>
<accession>Q6PIN9</accession>
<accession>Q9NQA4</accession>
<keyword id="KW-0025">Alternative splicing</keyword>
<keyword id="KW-1003">Cell membrane</keyword>
<keyword id="KW-1015">Disulfide bond</keyword>
<keyword id="KW-0325">Glycoprotein</keyword>
<keyword id="KW-0407">Ion channel</keyword>
<keyword id="KW-0406">Ion transport</keyword>
<keyword id="KW-0472">Membrane</keyword>
<keyword id="KW-1267">Proteomics identification</keyword>
<keyword id="KW-1185">Reference proteome</keyword>
<keyword id="KW-0915">Sodium</keyword>
<keyword id="KW-0894">Sodium channel</keyword>
<keyword id="KW-0739">Sodium transport</keyword>
<keyword id="KW-0812">Transmembrane</keyword>
<keyword id="KW-1133">Transmembrane helix</keyword>
<keyword id="KW-0813">Transport</keyword>
<proteinExistence type="evidence at protein level"/>
<reference key="1">
    <citation type="journal article" date="2000" name="NeuroReport">
        <title>A new member of acid-sensing ion channels from pituitary gland.</title>
        <authorList>
            <person name="Gruender S."/>
            <person name="Geisler H.-S."/>
            <person name="Baessler E.-L."/>
            <person name="Ruppersberg J.P."/>
        </authorList>
    </citation>
    <scope>NUCLEOTIDE SEQUENCE [GENOMIC DNA] (ISOFORM 3)</scope>
    <scope>TISSUE SPECIFICITY</scope>
    <scope>VARIANTS LEU-508 AND ALA-511</scope>
    <source>
        <tissue>Pituitary</tissue>
    </source>
</reference>
<reference key="2">
    <citation type="journal article" date="2005" name="Nature">
        <title>Generation and annotation of the DNA sequences of human chromosomes 2 and 4.</title>
        <authorList>
            <person name="Hillier L.W."/>
            <person name="Graves T.A."/>
            <person name="Fulton R.S."/>
            <person name="Fulton L.A."/>
            <person name="Pepin K.H."/>
            <person name="Minx P."/>
            <person name="Wagner-McPherson C."/>
            <person name="Layman D."/>
            <person name="Wylie K."/>
            <person name="Sekhon M."/>
            <person name="Becker M.C."/>
            <person name="Fewell G.A."/>
            <person name="Delehaunty K.D."/>
            <person name="Miner T.L."/>
            <person name="Nash W.E."/>
            <person name="Kremitzki C."/>
            <person name="Oddy L."/>
            <person name="Du H."/>
            <person name="Sun H."/>
            <person name="Bradshaw-Cordum H."/>
            <person name="Ali J."/>
            <person name="Carter J."/>
            <person name="Cordes M."/>
            <person name="Harris A."/>
            <person name="Isak A."/>
            <person name="van Brunt A."/>
            <person name="Nguyen C."/>
            <person name="Du F."/>
            <person name="Courtney L."/>
            <person name="Kalicki J."/>
            <person name="Ozersky P."/>
            <person name="Abbott S."/>
            <person name="Armstrong J."/>
            <person name="Belter E.A."/>
            <person name="Caruso L."/>
            <person name="Cedroni M."/>
            <person name="Cotton M."/>
            <person name="Davidson T."/>
            <person name="Desai A."/>
            <person name="Elliott G."/>
            <person name="Erb T."/>
            <person name="Fronick C."/>
            <person name="Gaige T."/>
            <person name="Haakenson W."/>
            <person name="Haglund K."/>
            <person name="Holmes A."/>
            <person name="Harkins R."/>
            <person name="Kim K."/>
            <person name="Kruchowski S.S."/>
            <person name="Strong C.M."/>
            <person name="Grewal N."/>
            <person name="Goyea E."/>
            <person name="Hou S."/>
            <person name="Levy A."/>
            <person name="Martinka S."/>
            <person name="Mead K."/>
            <person name="McLellan M.D."/>
            <person name="Meyer R."/>
            <person name="Randall-Maher J."/>
            <person name="Tomlinson C."/>
            <person name="Dauphin-Kohlberg S."/>
            <person name="Kozlowicz-Reilly A."/>
            <person name="Shah N."/>
            <person name="Swearengen-Shahid S."/>
            <person name="Snider J."/>
            <person name="Strong J.T."/>
            <person name="Thompson J."/>
            <person name="Yoakum M."/>
            <person name="Leonard S."/>
            <person name="Pearman C."/>
            <person name="Trani L."/>
            <person name="Radionenko M."/>
            <person name="Waligorski J.E."/>
            <person name="Wang C."/>
            <person name="Rock S.M."/>
            <person name="Tin-Wollam A.-M."/>
            <person name="Maupin R."/>
            <person name="Latreille P."/>
            <person name="Wendl M.C."/>
            <person name="Yang S.-P."/>
            <person name="Pohl C."/>
            <person name="Wallis J.W."/>
            <person name="Spieth J."/>
            <person name="Bieri T.A."/>
            <person name="Berkowicz N."/>
            <person name="Nelson J.O."/>
            <person name="Osborne J."/>
            <person name="Ding L."/>
            <person name="Meyer R."/>
            <person name="Sabo A."/>
            <person name="Shotland Y."/>
            <person name="Sinha P."/>
            <person name="Wohldmann P.E."/>
            <person name="Cook L.L."/>
            <person name="Hickenbotham M.T."/>
            <person name="Eldred J."/>
            <person name="Williams D."/>
            <person name="Jones T.A."/>
            <person name="She X."/>
            <person name="Ciccarelli F.D."/>
            <person name="Izaurralde E."/>
            <person name="Taylor J."/>
            <person name="Schmutz J."/>
            <person name="Myers R.M."/>
            <person name="Cox D.R."/>
            <person name="Huang X."/>
            <person name="McPherson J.D."/>
            <person name="Mardis E.R."/>
            <person name="Clifton S.W."/>
            <person name="Warren W.C."/>
            <person name="Chinwalla A.T."/>
            <person name="Eddy S.R."/>
            <person name="Marra M.A."/>
            <person name="Ovcharenko I."/>
            <person name="Furey T.S."/>
            <person name="Miller W."/>
            <person name="Eichler E.E."/>
            <person name="Bork P."/>
            <person name="Suyama M."/>
            <person name="Torrents D."/>
            <person name="Waterston R.H."/>
            <person name="Wilson R.K."/>
        </authorList>
    </citation>
    <scope>NUCLEOTIDE SEQUENCE [LARGE SCALE GENOMIC DNA]</scope>
</reference>
<reference key="3">
    <citation type="journal article" date="2004" name="Genome Res.">
        <title>The status, quality, and expansion of the NIH full-length cDNA project: the Mammalian Gene Collection (MGC).</title>
        <authorList>
            <consortium name="The MGC Project Team"/>
        </authorList>
    </citation>
    <scope>NUCLEOTIDE SEQUENCE [LARGE SCALE MRNA] (ISOFORMS 1 AND 2)</scope>
    <scope>VARIANTS LEU-508 AND ALA-511</scope>
    <source>
        <tissue>Brain</tissue>
    </source>
</reference>
<reference key="4">
    <citation type="journal article" date="2001" name="Eur. J. Hum. Genet.">
        <title>Acid-sensing ion channel (ASIC) 4 gene: physical mapping, genomic organisation, and evaluation as a candidate for paroxysmal dystonia.</title>
        <authorList>
            <person name="Gruender S."/>
            <person name="Geisler H.-S."/>
            <person name="Rainier S."/>
            <person name="Fink J.K."/>
        </authorList>
    </citation>
    <scope>NUCLEOTIDE SEQUENCE [GENOMIC DNA] (ISOFORM 3)</scope>
    <scope>VARIANTS LEU-508 AND ALA-511</scope>
</reference>
<comment type="function">
    <text evidence="3">Does not exhibit measurable stand-alone pH-gated sodium channel activity but may form pH-gated heterotrimeric sodium channels. Its activity could also depend on alternative gating mechanisms.</text>
</comment>
<comment type="subunit">
    <text evidence="2">Homotrimer. Heterotrimer; with other ASIC proteins producing functional channels.</text>
</comment>
<comment type="interaction">
    <interactant intactId="EBI-9116154">
        <id>Q96FT7</id>
    </interactant>
    <interactant intactId="EBI-9087860">
        <id>P32243-2</id>
        <label>OTX2</label>
    </interactant>
    <organismsDiffer>false</organismsDiffer>
    <experiments>3</experiments>
</comment>
<comment type="interaction">
    <interactant intactId="EBI-25898949">
        <id>Q96FT7-2</id>
    </interactant>
    <interactant intactId="EBI-720609">
        <id>O76024</id>
        <label>WFS1</label>
    </interactant>
    <organismsDiffer>false</organismsDiffer>
    <experiments>3</experiments>
</comment>
<comment type="interaction">
    <interactant intactId="EBI-9089489">
        <id>Q96FT7-4</id>
    </interactant>
    <interactant intactId="EBI-21535880">
        <id>Q92870-2</id>
        <label>APBB2</label>
    </interactant>
    <organismsDiffer>false</organismsDiffer>
    <experiments>3</experiments>
</comment>
<comment type="interaction">
    <interactant intactId="EBI-9089489">
        <id>Q96FT7-4</id>
    </interactant>
    <interactant intactId="EBI-930964">
        <id>P54253</id>
        <label>ATXN1</label>
    </interactant>
    <organismsDiffer>false</organismsDiffer>
    <experiments>6</experiments>
</comment>
<comment type="interaction">
    <interactant intactId="EBI-9089489">
        <id>Q96FT7-4</id>
    </interactant>
    <interactant intactId="EBI-946046">
        <id>P54252</id>
        <label>ATXN3</label>
    </interactant>
    <organismsDiffer>false</organismsDiffer>
    <experiments>3</experiments>
</comment>
<comment type="interaction">
    <interactant intactId="EBI-9089489">
        <id>Q96FT7-4</id>
    </interactant>
    <interactant intactId="EBI-10988864">
        <id>P46379-2</id>
        <label>BAG6</label>
    </interactant>
    <organismsDiffer>false</organismsDiffer>
    <experiments>3</experiments>
</comment>
<comment type="interaction">
    <interactant intactId="EBI-9089489">
        <id>Q96FT7-4</id>
    </interactant>
    <interactant intactId="EBI-395638">
        <id>O14645</id>
        <label>DNALI1</label>
    </interactant>
    <organismsDiffer>false</organismsDiffer>
    <experiments>3</experiments>
</comment>
<comment type="interaction">
    <interactant intactId="EBI-9089489">
        <id>Q96FT7-4</id>
    </interactant>
    <interactant intactId="EBI-10968534">
        <id>P50570-2</id>
        <label>DNM2</label>
    </interactant>
    <organismsDiffer>false</organismsDiffer>
    <experiments>3</experiments>
</comment>
<comment type="interaction">
    <interactant intactId="EBI-9089489">
        <id>Q96FT7-4</id>
    </interactant>
    <interactant intactId="EBI-1054228">
        <id>P41091</id>
        <label>EIF2S3</label>
    </interactant>
    <organismsDiffer>false</organismsDiffer>
    <experiments>3</experiments>
</comment>
<comment type="interaction">
    <interactant intactId="EBI-9089489">
        <id>Q96FT7-4</id>
    </interactant>
    <interactant intactId="EBI-25852368">
        <id>O75460-2</id>
        <label>ERN1</label>
    </interactant>
    <organismsDiffer>false</organismsDiffer>
    <experiments>3</experiments>
</comment>
<comment type="interaction">
    <interactant intactId="EBI-9089489">
        <id>Q96FT7-4</id>
    </interactant>
    <interactant intactId="EBI-348399">
        <id>P22607</id>
        <label>FGFR3</label>
    </interactant>
    <organismsDiffer>false</organismsDiffer>
    <experiments>3</experiments>
</comment>
<comment type="interaction">
    <interactant intactId="EBI-9089489">
        <id>Q96FT7-4</id>
    </interactant>
    <interactant intactId="EBI-10226858">
        <id>Q0VDC6</id>
        <label>FKBP1A</label>
    </interactant>
    <organismsDiffer>false</organismsDiffer>
    <experiments>3</experiments>
</comment>
<comment type="interaction">
    <interactant intactId="EBI-9089489">
        <id>Q96FT7-4</id>
    </interactant>
    <interactant intactId="EBI-744302">
        <id>P14136</id>
        <label>GFAP</label>
    </interactant>
    <organismsDiffer>false</organismsDiffer>
    <experiments>3</experiments>
</comment>
<comment type="interaction">
    <interactant intactId="EBI-9089489">
        <id>Q96FT7-4</id>
    </interactant>
    <interactant intactId="EBI-8285963">
        <id>Q14957</id>
        <label>GRIN2C</label>
    </interactant>
    <organismsDiffer>false</organismsDiffer>
    <experiments>3</experiments>
</comment>
<comment type="interaction">
    <interactant intactId="EBI-9089489">
        <id>Q96FT7-4</id>
    </interactant>
    <interactant intactId="EBI-747754">
        <id>P28799</id>
        <label>GRN</label>
    </interactant>
    <organismsDiffer>false</organismsDiffer>
    <experiments>3</experiments>
</comment>
<comment type="interaction">
    <interactant intactId="EBI-9089489">
        <id>Q96FT7-4</id>
    </interactant>
    <interactant intactId="EBI-351506">
        <id>P06396</id>
        <label>GSN</label>
    </interactant>
    <organismsDiffer>false</organismsDiffer>
    <experiments>3</experiments>
</comment>
<comment type="interaction">
    <interactant intactId="EBI-9089489">
        <id>Q96FT7-4</id>
    </interactant>
    <interactant intactId="EBI-356991">
        <id>P54652</id>
        <label>HSPA2</label>
    </interactant>
    <organismsDiffer>false</organismsDiffer>
    <experiments>3</experiments>
</comment>
<comment type="interaction">
    <interactant intactId="EBI-9089489">
        <id>Q96FT7-4</id>
    </interactant>
    <interactant intactId="EBI-352682">
        <id>P04792</id>
        <label>HSPB1</label>
    </interactant>
    <organismsDiffer>false</organismsDiffer>
    <experiments>3</experiments>
</comment>
<comment type="interaction">
    <interactant intactId="EBI-9089489">
        <id>Q96FT7-4</id>
    </interactant>
    <interactant intactId="EBI-517086">
        <id>O43464</id>
        <label>HTRA2</label>
    </interactant>
    <organismsDiffer>false</organismsDiffer>
    <experiments>3</experiments>
</comment>
<comment type="interaction">
    <interactant intactId="EBI-9089489">
        <id>Q96FT7-4</id>
    </interactant>
    <interactant intactId="EBI-466029">
        <id>P42858</id>
        <label>HTT</label>
    </interactant>
    <organismsDiffer>false</organismsDiffer>
    <experiments>3</experiments>
</comment>
<comment type="interaction">
    <interactant intactId="EBI-9089489">
        <id>Q96FT7-4</id>
    </interactant>
    <interactant intactId="EBI-10975473">
        <id>O60333-2</id>
        <label>KIF1B</label>
    </interactant>
    <organismsDiffer>false</organismsDiffer>
    <experiments>3</experiments>
</comment>
<comment type="interaction">
    <interactant intactId="EBI-9089489">
        <id>Q96FT7-4</id>
    </interactant>
    <interactant intactId="EBI-948266">
        <id>O14901</id>
        <label>KLF11</label>
    </interactant>
    <organismsDiffer>false</organismsDiffer>
    <experiments>3</experiments>
</comment>
<comment type="interaction">
    <interactant intactId="EBI-9089489">
        <id>Q96FT7-4</id>
    </interactant>
    <interactant intactId="EBI-713665">
        <id>P19404</id>
        <label>NDUFV2</label>
    </interactant>
    <organismsDiffer>false</organismsDiffer>
    <experiments>3</experiments>
</comment>
<comment type="interaction">
    <interactant intactId="EBI-9089489">
        <id>Q96FT7-4</id>
    </interactant>
    <interactant intactId="EBI-1391623">
        <id>P29474</id>
        <label>NOS3</label>
    </interactant>
    <organismsDiffer>false</organismsDiffer>
    <experiments>3</experiments>
</comment>
<comment type="interaction">
    <interactant intactId="EBI-9089489">
        <id>Q96FT7-4</id>
    </interactant>
    <interactant intactId="EBI-2811583">
        <id>Q9BVL2</id>
        <label>NUP58</label>
    </interactant>
    <organismsDiffer>false</organismsDiffer>
    <experiments>3</experiments>
</comment>
<comment type="interaction">
    <interactant intactId="EBI-9089489">
        <id>Q96FT7-4</id>
    </interactant>
    <interactant intactId="EBI-721853">
        <id>O14832</id>
        <label>PHYH</label>
    </interactant>
    <organismsDiffer>false</organismsDiffer>
    <experiments>3</experiments>
</comment>
<comment type="interaction">
    <interactant intactId="EBI-9089489">
        <id>Q96FT7-4</id>
    </interactant>
    <interactant intactId="EBI-50433196">
        <id>A0A6Q8PF08</id>
        <label>PMP22</label>
    </interactant>
    <organismsDiffer>false</organismsDiffer>
    <experiments>3</experiments>
</comment>
<comment type="interaction">
    <interactant intactId="EBI-9089489">
        <id>Q96FT7-4</id>
    </interactant>
    <interactant intactId="EBI-749195">
        <id>P60891</id>
        <label>PRPS1</label>
    </interactant>
    <organismsDiffer>false</organismsDiffer>
    <experiments>3</experiments>
</comment>
<comment type="interaction">
    <interactant intactId="EBI-9089489">
        <id>Q96FT7-4</id>
    </interactant>
    <interactant intactId="EBI-396669">
        <id>Q9Y3C5</id>
        <label>RNF11</label>
    </interactant>
    <organismsDiffer>false</organismsDiffer>
    <experiments>3</experiments>
</comment>
<comment type="interaction">
    <interactant intactId="EBI-9089489">
        <id>Q96FT7-4</id>
    </interactant>
    <interactant intactId="EBI-1053431">
        <id>P49591</id>
        <label>SARS1</label>
    </interactant>
    <organismsDiffer>false</organismsDiffer>
    <experiments>3</experiments>
</comment>
<comment type="interaction">
    <interactant intactId="EBI-9089489">
        <id>Q96FT7-4</id>
    </interactant>
    <interactant intactId="EBI-5235340">
        <id>Q7Z699</id>
        <label>SPRED1</label>
    </interactant>
    <organismsDiffer>false</organismsDiffer>
    <experiments>3</experiments>
</comment>
<comment type="interaction">
    <interactant intactId="EBI-9089489">
        <id>Q96FT7-4</id>
    </interactant>
    <interactant intactId="EBI-372899">
        <id>Q13148</id>
        <label>TARDBP</label>
    </interactant>
    <organismsDiffer>false</organismsDiffer>
    <experiments>6</experiments>
</comment>
<comment type="interaction">
    <interactant intactId="EBI-9089489">
        <id>Q96FT7-4</id>
    </interactant>
    <interactant intactId="EBI-524257">
        <id>O14656</id>
        <label>TOR1A</label>
    </interactant>
    <organismsDiffer>false</organismsDiffer>
    <experiments>3</experiments>
</comment>
<comment type="interaction">
    <interactant intactId="EBI-9089489">
        <id>Q96FT7-4</id>
    </interactant>
    <interactant intactId="EBI-720609">
        <id>O76024</id>
        <label>WFS1</label>
    </interactant>
    <organismsDiffer>false</organismsDiffer>
    <experiments>3</experiments>
</comment>
<comment type="subcellular location">
    <subcellularLocation>
        <location evidence="1">Cell membrane</location>
        <topology evidence="4">Multi-pass membrane protein</topology>
    </subcellularLocation>
</comment>
<comment type="alternative products">
    <event type="alternative splicing"/>
    <isoform>
        <id>Q96FT7-4</id>
        <name>3</name>
        <sequence type="displayed"/>
    </isoform>
    <isoform>
        <id>Q96FT7-1</id>
        <name>1</name>
        <sequence type="described" ref="VSP_061445"/>
    </isoform>
    <isoform>
        <id>Q96FT7-2</id>
        <name>2</name>
        <sequence type="described" ref="VSP_061443 VSP_061444"/>
    </isoform>
</comment>
<comment type="tissue specificity">
    <text evidence="6">Expressed in pituitary gland. Weakly expressed in brain, vestibular system and organ of Corti.</text>
</comment>
<comment type="similarity">
    <text evidence="9">Belongs to the amiloride-sensitive sodium channel (TC 1.A.6) family. ASIC4 subfamily.</text>
</comment>
<comment type="sequence caution" evidence="9">
    <conflict type="erroneous initiation">
        <sequence resource="EMBL-CDS" id="AAH10439"/>
    </conflict>
    <text>Extended N-terminus.</text>
</comment>
<comment type="sequence caution" evidence="9">
    <conflict type="erroneous initiation">
        <sequence resource="EMBL-CDS" id="AAH31812"/>
    </conflict>
    <text>Extended N-terminus.</text>
</comment>
<gene>
    <name evidence="10" type="primary">ASIC4</name>
    <name type="synonym">ACCN4</name>
</gene>
<feature type="chain" id="PRO_0000181304" description="Acid-sensing ion channel 4">
    <location>
        <begin position="1"/>
        <end position="539"/>
    </location>
</feature>
<feature type="topological domain" description="Cytoplasmic" evidence="9">
    <location>
        <begin position="1"/>
        <end position="68"/>
    </location>
</feature>
<feature type="transmembrane region" description="Helical" evidence="4">
    <location>
        <begin position="69"/>
        <end position="89"/>
    </location>
</feature>
<feature type="topological domain" description="Extracellular" evidence="9">
    <location>
        <begin position="90"/>
        <end position="438"/>
    </location>
</feature>
<feature type="transmembrane region" description="Helical" evidence="4">
    <location>
        <begin position="439"/>
        <end position="459"/>
    </location>
</feature>
<feature type="topological domain" description="Cytoplasmic" evidence="9">
    <location>
        <begin position="460"/>
        <end position="539"/>
    </location>
</feature>
<feature type="region of interest" description="Disordered" evidence="5">
    <location>
        <begin position="501"/>
        <end position="531"/>
    </location>
</feature>
<feature type="short sequence motif" description="GAS motif; ion selectivity filter" evidence="1">
    <location>
        <begin position="452"/>
        <end position="454"/>
    </location>
</feature>
<feature type="glycosylation site" description="N-linked (GlcNAc...) asparagine" evidence="4">
    <location>
        <position position="191"/>
    </location>
</feature>
<feature type="glycosylation site" description="N-linked (GlcNAc...) asparagine" evidence="4">
    <location>
        <position position="243"/>
    </location>
</feature>
<feature type="glycosylation site" description="N-linked (GlcNAc...) asparagine" evidence="4">
    <location>
        <position position="376"/>
    </location>
</feature>
<feature type="disulfide bond" evidence="1">
    <location>
        <begin position="118"/>
        <end position="202"/>
    </location>
</feature>
<feature type="disulfide bond" evidence="1">
    <location>
        <begin position="180"/>
        <end position="187"/>
    </location>
</feature>
<feature type="disulfide bond" evidence="1">
    <location>
        <begin position="296"/>
        <end position="375"/>
    </location>
</feature>
<feature type="disulfide bond" evidence="1">
    <location>
        <begin position="318"/>
        <end position="371"/>
    </location>
</feature>
<feature type="disulfide bond" evidence="1">
    <location>
        <begin position="322"/>
        <end position="369"/>
    </location>
</feature>
<feature type="disulfide bond" evidence="1">
    <location>
        <begin position="331"/>
        <end position="353"/>
    </location>
</feature>
<feature type="disulfide bond" evidence="1">
    <location>
        <begin position="333"/>
        <end position="345"/>
    </location>
</feature>
<feature type="splice variant" id="VSP_061443" description="In isoform 2.">
    <original>LTYLP</original>
    <variation>VSISC</variation>
    <location>
        <begin position="286"/>
        <end position="290"/>
    </location>
</feature>
<feature type="splice variant" id="VSP_061444" description="In isoform 2.">
    <location>
        <begin position="291"/>
        <end position="539"/>
    </location>
</feature>
<feature type="splice variant" id="VSP_061445" description="In isoform 1.">
    <location>
        <begin position="340"/>
        <end position="358"/>
    </location>
</feature>
<feature type="sequence variant" id="VAR_052038" description="In dbSNP:rs6436153.">
    <original>P</original>
    <variation>Q</variation>
    <location>
        <position position="506"/>
    </location>
</feature>
<feature type="sequence variant" id="VAR_052039" description="In dbSNP:rs11689281." evidence="6 7 8">
    <original>R</original>
    <variation>L</variation>
    <location>
        <position position="508"/>
    </location>
</feature>
<feature type="sequence variant" id="VAR_059806" description="In dbSNP:rs11695248." evidence="6 7 8">
    <original>V</original>
    <variation>A</variation>
    <location>
        <position position="511"/>
    </location>
</feature>
<protein>
    <recommendedName>
        <fullName evidence="9">Acid-sensing ion channel 4</fullName>
        <shortName>ASIC4</shortName>
    </recommendedName>
    <alternativeName>
        <fullName>Amiloride-sensitive cation channel 4</fullName>
    </alternativeName>
    <alternativeName>
        <fullName>Amiloride-sensitive cation channel 4, pituitary</fullName>
    </alternativeName>
</protein>
<sequence>MPIEIVCKIKFAEEDAKPKEKEAGDEQSLLGAVAPGAAPRDLATFASTSTLHGLGRACGPGPHGLRRTLWALALLTSLAAFLYQAAGLARGYLTRPHLVAMDPAAPAPVAGFPAVTLCNINRFRHSALSDADIFHLANLTGLPPKDRDGHRAAGLRYPEPDMVDILNRTGHQLADMLKSCNFSGHHCSASNFSVVYTRYGKCYTFNADPRSSLPSRAGGMGSGLEIMLDIQQEEYLPIWRETNETSFEAGIRVQIHSQEEPPYIHQLGFGVSPGFQTFVSCQEQRLTYLPQPWGNCRAESELREPELQGYSAYSVSACRLRCEKEAVLQRCHCRMVHMPGNETICPPNIYIECADHTLDSLGGGPEGPCFCPTPCNLTRYGKEISMVRIPNRGSARYLARKYNRNETYIRENFLVLDVFFEALTSEAMEQRAAYGLSALLGDLGGQMGLFIGASILTLLEILDYIYEVSWDRLKRVWRRPKTPLRTSTGGISTLGLQELKEQSPCPSRGRVEGGGVSSLLPNHHHPHGPPGGLFEDFAC</sequence>
<name>ASIC4_HUMAN</name>
<dbReference type="EMBL" id="AJ271643">
    <property type="protein sequence ID" value="CAB93980.1"/>
    <property type="molecule type" value="Genomic_DNA"/>
</dbReference>
<dbReference type="EMBL" id="AC009955">
    <property type="status" value="NOT_ANNOTATED_CDS"/>
    <property type="molecule type" value="Genomic_DNA"/>
</dbReference>
<dbReference type="EMBL" id="AC053503">
    <property type="protein sequence ID" value="AAY15054.1"/>
    <property type="molecule type" value="Genomic_DNA"/>
</dbReference>
<dbReference type="EMBL" id="AC139723">
    <property type="status" value="NOT_ANNOTATED_CDS"/>
    <property type="molecule type" value="Genomic_DNA"/>
</dbReference>
<dbReference type="EMBL" id="BC010439">
    <property type="protein sequence ID" value="AAH10439.1"/>
    <property type="status" value="ALT_INIT"/>
    <property type="molecule type" value="mRNA"/>
</dbReference>
<dbReference type="EMBL" id="BC031812">
    <property type="protein sequence ID" value="AAH31812.1"/>
    <property type="status" value="ALT_INIT"/>
    <property type="molecule type" value="mRNA"/>
</dbReference>
<dbReference type="EMBL" id="AJ408881">
    <property type="protein sequence ID" value="CAC51338.1"/>
    <property type="molecule type" value="Genomic_DNA"/>
</dbReference>
<dbReference type="EMBL" id="AJ408882">
    <property type="protein sequence ID" value="CAC51338.1"/>
    <property type="status" value="JOINED"/>
    <property type="molecule type" value="Genomic_DNA"/>
</dbReference>
<dbReference type="EMBL" id="AJ408883">
    <property type="protein sequence ID" value="CAC51338.1"/>
    <property type="status" value="JOINED"/>
    <property type="molecule type" value="Genomic_DNA"/>
</dbReference>
<dbReference type="EMBL" id="AJ408884">
    <property type="protein sequence ID" value="CAC51338.1"/>
    <property type="status" value="JOINED"/>
    <property type="molecule type" value="Genomic_DNA"/>
</dbReference>
<dbReference type="CCDS" id="CCDS2442.2">
    <molecule id="Q96FT7-1"/>
</dbReference>
<dbReference type="CCDS" id="CCDS33384.2">
    <molecule id="Q96FT7-4"/>
</dbReference>
<dbReference type="RefSeq" id="NP_878267.3">
    <molecule id="Q96FT7-1"/>
    <property type="nucleotide sequence ID" value="NM_182847.3"/>
</dbReference>
<dbReference type="SMR" id="Q96FT7"/>
<dbReference type="BioGRID" id="120693">
    <property type="interactions" value="179"/>
</dbReference>
<dbReference type="FunCoup" id="Q96FT7">
    <property type="interactions" value="574"/>
</dbReference>
<dbReference type="IntAct" id="Q96FT7">
    <property type="interactions" value="163"/>
</dbReference>
<dbReference type="MINT" id="Q96FT7"/>
<dbReference type="STRING" id="9606.ENSP00000350786"/>
<dbReference type="GlyCosmos" id="Q96FT7">
    <property type="glycosylation" value="3 sites, No reported glycans"/>
</dbReference>
<dbReference type="GlyGen" id="Q96FT7">
    <property type="glycosylation" value="4 sites"/>
</dbReference>
<dbReference type="iPTMnet" id="Q96FT7"/>
<dbReference type="PhosphoSitePlus" id="Q96FT7"/>
<dbReference type="BioMuta" id="ASIC4"/>
<dbReference type="DMDM" id="296434387"/>
<dbReference type="MassIVE" id="Q96FT7"/>
<dbReference type="PaxDb" id="9606-ENSP00000326627"/>
<dbReference type="PeptideAtlas" id="Q96FT7"/>
<dbReference type="ProteomicsDB" id="76552">
    <molecule id="Q96FT7-1"/>
</dbReference>
<dbReference type="ProteomicsDB" id="76553">
    <molecule id="Q96FT7-2"/>
</dbReference>
<dbReference type="ProteomicsDB" id="76554">
    <molecule id="Q96FT7-4"/>
</dbReference>
<dbReference type="Antibodypedia" id="20142">
    <property type="antibodies" value="141 antibodies from 24 providers"/>
</dbReference>
<dbReference type="DNASU" id="55515"/>
<dbReference type="Ensembl" id="ENST00000347842.8">
    <molecule id="Q96FT7-1"/>
    <property type="protein sequence ID" value="ENSP00000326627.4"/>
    <property type="gene ID" value="ENSG00000072182.14"/>
</dbReference>
<dbReference type="Ensembl" id="ENST00000358078.5">
    <molecule id="Q96FT7-4"/>
    <property type="protein sequence ID" value="ENSP00000350786.5"/>
    <property type="gene ID" value="ENSG00000072182.14"/>
</dbReference>
<dbReference type="GeneID" id="55515"/>
<dbReference type="KEGG" id="hsa:55515"/>
<dbReference type="MANE-Select" id="ENST00000358078.5">
    <property type="protein sequence ID" value="ENSP00000350786.5"/>
    <property type="RefSeq nucleotide sequence ID" value="NM_018674.6"/>
    <property type="RefSeq protein sequence ID" value="NP_061144.4"/>
</dbReference>
<dbReference type="UCSC" id="uc002vma.4">
    <molecule id="Q96FT7-4"/>
    <property type="organism name" value="human"/>
</dbReference>
<dbReference type="AGR" id="HGNC:21263"/>
<dbReference type="CTD" id="55515"/>
<dbReference type="DisGeNET" id="55515"/>
<dbReference type="GeneCards" id="ASIC4"/>
<dbReference type="HGNC" id="HGNC:21263">
    <property type="gene designation" value="ASIC4"/>
</dbReference>
<dbReference type="HPA" id="ENSG00000072182">
    <property type="expression patterns" value="Group enriched (brain, pituitary gland, retina)"/>
</dbReference>
<dbReference type="MIM" id="606715">
    <property type="type" value="gene"/>
</dbReference>
<dbReference type="neXtProt" id="NX_Q96FT7"/>
<dbReference type="OpenTargets" id="ENSG00000072182"/>
<dbReference type="PharmGKB" id="PA134956731"/>
<dbReference type="VEuPathDB" id="HostDB:ENSG00000072182"/>
<dbReference type="eggNOG" id="KOG4294">
    <property type="taxonomic scope" value="Eukaryota"/>
</dbReference>
<dbReference type="GeneTree" id="ENSGT00940000159052"/>
<dbReference type="HOGENOM" id="CLU_020415_1_2_1"/>
<dbReference type="InParanoid" id="Q96FT7"/>
<dbReference type="OMA" id="FNFLHPY"/>
<dbReference type="OrthoDB" id="6502088at2759"/>
<dbReference type="PAN-GO" id="Q96FT7">
    <property type="GO annotations" value="3 GO annotations based on evolutionary models"/>
</dbReference>
<dbReference type="PhylomeDB" id="Q96FT7"/>
<dbReference type="TreeFam" id="TF330663"/>
<dbReference type="PathwayCommons" id="Q96FT7"/>
<dbReference type="Reactome" id="R-HSA-2672351">
    <property type="pathway name" value="Stimuli-sensing channels"/>
</dbReference>
<dbReference type="SignaLink" id="Q96FT7"/>
<dbReference type="BioGRID-ORCS" id="55515">
    <property type="hits" value="5 hits in 1150 CRISPR screens"/>
</dbReference>
<dbReference type="ChiTaRS" id="ASIC4">
    <property type="organism name" value="human"/>
</dbReference>
<dbReference type="GeneWiki" id="ACCN4"/>
<dbReference type="GenomeRNAi" id="55515"/>
<dbReference type="Pharos" id="Q96FT7">
    <property type="development level" value="Tbio"/>
</dbReference>
<dbReference type="PRO" id="PR:Q96FT7"/>
<dbReference type="Proteomes" id="UP000005640">
    <property type="component" value="Chromosome 2"/>
</dbReference>
<dbReference type="RNAct" id="Q96FT7">
    <property type="molecule type" value="protein"/>
</dbReference>
<dbReference type="Bgee" id="ENSG00000072182">
    <property type="expression patterns" value="Expressed in pituitary gland and 123 other cell types or tissues"/>
</dbReference>
<dbReference type="GO" id="GO:0005886">
    <property type="term" value="C:plasma membrane"/>
    <property type="evidence" value="ECO:0000318"/>
    <property type="project" value="GO_Central"/>
</dbReference>
<dbReference type="GO" id="GO:0015280">
    <property type="term" value="F:ligand-gated sodium channel activity"/>
    <property type="evidence" value="ECO:0000318"/>
    <property type="project" value="GO_Central"/>
</dbReference>
<dbReference type="GO" id="GO:0001662">
    <property type="term" value="P:behavioral fear response"/>
    <property type="evidence" value="ECO:0007669"/>
    <property type="project" value="Ensembl"/>
</dbReference>
<dbReference type="GO" id="GO:0035725">
    <property type="term" value="P:sodium ion transmembrane transport"/>
    <property type="evidence" value="ECO:0000318"/>
    <property type="project" value="GO_Central"/>
</dbReference>
<dbReference type="FunFam" id="2.60.470.10:FF:000001">
    <property type="entry name" value="Acid-sensing (proton-gated) ion channel family member 4a"/>
    <property type="match status" value="1"/>
</dbReference>
<dbReference type="FunFam" id="1.10.287.770:FF:000001">
    <property type="entry name" value="Acid-sensing ion channel subunit 1"/>
    <property type="match status" value="1"/>
</dbReference>
<dbReference type="Gene3D" id="2.60.470.10">
    <property type="entry name" value="Acid-sensing ion channels like domains"/>
    <property type="match status" value="1"/>
</dbReference>
<dbReference type="Gene3D" id="1.10.287.770">
    <property type="entry name" value="YojJ-like"/>
    <property type="match status" value="1"/>
</dbReference>
<dbReference type="InterPro" id="IPR001873">
    <property type="entry name" value="ENaC"/>
</dbReference>
<dbReference type="InterPro" id="IPR020903">
    <property type="entry name" value="ENaC_CS"/>
</dbReference>
<dbReference type="PANTHER" id="PTHR11690:SF13">
    <property type="entry name" value="ACID-SENSING ION CHANNEL 4"/>
    <property type="match status" value="1"/>
</dbReference>
<dbReference type="PANTHER" id="PTHR11690">
    <property type="entry name" value="AMILORIDE-SENSITIVE SODIUM CHANNEL-RELATED"/>
    <property type="match status" value="1"/>
</dbReference>
<dbReference type="Pfam" id="PF00858">
    <property type="entry name" value="ASC"/>
    <property type="match status" value="1"/>
</dbReference>
<dbReference type="PRINTS" id="PR01078">
    <property type="entry name" value="AMINACHANNEL"/>
</dbReference>
<dbReference type="PROSITE" id="PS01206">
    <property type="entry name" value="ASC"/>
    <property type="match status" value="1"/>
</dbReference>